<protein>
    <recommendedName>
        <fullName>Histone H2B</fullName>
    </recommendedName>
</protein>
<evidence type="ECO:0000250" key="1"/>
<evidence type="ECO:0000256" key="2">
    <source>
        <dbReference type="SAM" id="MobiDB-lite"/>
    </source>
</evidence>
<evidence type="ECO:0000305" key="3"/>
<dbReference type="EMBL" id="L11067">
    <property type="protein sequence ID" value="AAC37353.1"/>
    <property type="molecule type" value="Genomic_DNA"/>
</dbReference>
<dbReference type="EMBL" id="S67324">
    <property type="protein sequence ID" value="AAB28737.1"/>
    <property type="molecule type" value="Genomic_DNA"/>
</dbReference>
<dbReference type="SMR" id="P35067"/>
<dbReference type="GO" id="GO:0000786">
    <property type="term" value="C:nucleosome"/>
    <property type="evidence" value="ECO:0007669"/>
    <property type="project" value="UniProtKB-KW"/>
</dbReference>
<dbReference type="GO" id="GO:0005634">
    <property type="term" value="C:nucleus"/>
    <property type="evidence" value="ECO:0007669"/>
    <property type="project" value="UniProtKB-SubCell"/>
</dbReference>
<dbReference type="GO" id="GO:0003677">
    <property type="term" value="F:DNA binding"/>
    <property type="evidence" value="ECO:0007669"/>
    <property type="project" value="UniProtKB-KW"/>
</dbReference>
<dbReference type="GO" id="GO:0046982">
    <property type="term" value="F:protein heterodimerization activity"/>
    <property type="evidence" value="ECO:0007669"/>
    <property type="project" value="InterPro"/>
</dbReference>
<dbReference type="GO" id="GO:0030527">
    <property type="term" value="F:structural constituent of chromatin"/>
    <property type="evidence" value="ECO:0007669"/>
    <property type="project" value="InterPro"/>
</dbReference>
<dbReference type="CDD" id="cd22910">
    <property type="entry name" value="HFD_H2B"/>
    <property type="match status" value="1"/>
</dbReference>
<dbReference type="FunFam" id="1.10.20.10:FF:000016">
    <property type="entry name" value="Histone H2B"/>
    <property type="match status" value="1"/>
</dbReference>
<dbReference type="Gene3D" id="1.10.20.10">
    <property type="entry name" value="Histone, subunit A"/>
    <property type="match status" value="1"/>
</dbReference>
<dbReference type="InterPro" id="IPR009072">
    <property type="entry name" value="Histone-fold"/>
</dbReference>
<dbReference type="InterPro" id="IPR007125">
    <property type="entry name" value="Histone_H2A/H2B/H3"/>
</dbReference>
<dbReference type="InterPro" id="IPR000558">
    <property type="entry name" value="Histone_H2B"/>
</dbReference>
<dbReference type="InterPro" id="IPR055333">
    <property type="entry name" value="HISTONE_H2B_site"/>
</dbReference>
<dbReference type="PANTHER" id="PTHR23428">
    <property type="entry name" value="HISTONE H2B"/>
    <property type="match status" value="1"/>
</dbReference>
<dbReference type="Pfam" id="PF00125">
    <property type="entry name" value="Histone"/>
    <property type="match status" value="1"/>
</dbReference>
<dbReference type="PRINTS" id="PR00621">
    <property type="entry name" value="HISTONEH2B"/>
</dbReference>
<dbReference type="SMART" id="SM00427">
    <property type="entry name" value="H2B"/>
    <property type="match status" value="1"/>
</dbReference>
<dbReference type="SUPFAM" id="SSF47113">
    <property type="entry name" value="Histone-fold"/>
    <property type="match status" value="1"/>
</dbReference>
<dbReference type="PROSITE" id="PS00357">
    <property type="entry name" value="HISTONE_H2B"/>
    <property type="match status" value="1"/>
</dbReference>
<reference key="1">
    <citation type="journal article" date="1993" name="J. Mol. Evol.">
        <title>Nucleotide sequence of the histone gene cluster in the coral Acropora formosa (Cnidaria; Scleractinia): features of histone gene structure and organization are common to diploblastic and triploblastic metazoans.</title>
        <authorList>
            <person name="Miller D.J."/>
            <person name="Harrison P.L."/>
            <person name="Mahony T.J."/>
            <person name="McMillan J.P."/>
            <person name="Miles A."/>
            <person name="Odorico D.M."/>
            <person name="ten Lohuis M.R."/>
        </authorList>
    </citation>
    <scope>NUCLEOTIDE SEQUENCE [GENOMIC DNA]</scope>
</reference>
<name>H2B_ACRFO</name>
<proteinExistence type="inferred from homology"/>
<sequence>MAPKVRAAKKGEKRVGKAKSGTAETAKRRRGKRKESYAIYIYKVLKQVHPDTGISSKAMGIMNSFVNDIFERIAVESSRLSLYNKKATISSREIQTAIRLLLPGELAKHAVSEGTKAVTKYTSSK</sequence>
<accession>P35067</accession>
<organism>
    <name type="scientific">Acropora formosa</name>
    <name type="common">Staghorn coral</name>
    <dbReference type="NCBI Taxonomy" id="126732"/>
    <lineage>
        <taxon>Eukaryota</taxon>
        <taxon>Metazoa</taxon>
        <taxon>Cnidaria</taxon>
        <taxon>Anthozoa</taxon>
        <taxon>Hexacorallia</taxon>
        <taxon>Scleractinia</taxon>
        <taxon>Astrocoeniina</taxon>
        <taxon>Acroporidae</taxon>
        <taxon>Acropora</taxon>
    </lineage>
</organism>
<feature type="chain" id="PRO_0000071875" description="Histone H2B">
    <location>
        <begin position="1"/>
        <end position="125"/>
    </location>
</feature>
<feature type="region of interest" description="Disordered" evidence="2">
    <location>
        <begin position="1"/>
        <end position="32"/>
    </location>
</feature>
<feature type="glycosylation site" description="O-linked (GlcNAc) serine" evidence="1">
    <location>
        <position position="112"/>
    </location>
</feature>
<feature type="cross-link" description="Glycyl lysine isopeptide (Lys-Gly) (interchain with G-Cter in ubiquitin)" evidence="1">
    <location>
        <position position="120"/>
    </location>
</feature>
<keyword id="KW-0158">Chromosome</keyword>
<keyword id="KW-0238">DNA-binding</keyword>
<keyword id="KW-0325">Glycoprotein</keyword>
<keyword id="KW-1017">Isopeptide bond</keyword>
<keyword id="KW-0544">Nucleosome core</keyword>
<keyword id="KW-0539">Nucleus</keyword>
<keyword id="KW-0832">Ubl conjugation</keyword>
<comment type="function">
    <text>Core component of nucleosome. Nucleosomes wrap and compact DNA into chromatin, limiting DNA accessibility to the cellular machineries which require DNA as a template. Histones thereby play a central role in transcription regulation, DNA repair, DNA replication and chromosomal stability. DNA accessibility is regulated via a complex set of post-translational modifications of histones, also called histone code, and nucleosome remodeling.</text>
</comment>
<comment type="subunit">
    <text>The nucleosome is a histone octamer containing two molecules each of H2A, H2B, H3 and H4 assembled in one H3-H4 heterotetramer and two H2A-H2B heterodimers. The octamer wraps approximately 147 bp of DNA.</text>
</comment>
<comment type="subcellular location">
    <subcellularLocation>
        <location>Nucleus</location>
    </subcellularLocation>
    <subcellularLocation>
        <location>Chromosome</location>
    </subcellularLocation>
</comment>
<comment type="PTM">
    <text evidence="1">Monoubiquitination of Lys-120 gives a specific tag for epigenetic transcriptional activation and is also prerequisite for histone H3 'Lys-4' and 'Lys-79' methylation.</text>
</comment>
<comment type="PTM">
    <text evidence="1">GlcNAcylation at Ser-112 promotes monoubiquitination of Lys-120. It fluctuates in response to extracellular glucose, and associates with transcribed genes (By similarity).</text>
</comment>
<comment type="similarity">
    <text evidence="3">Belongs to the histone H2B family.</text>
</comment>